<feature type="chain" id="PRO_0000273132" description="Protein translocase subunit SecE">
    <location>
        <begin position="1"/>
        <end position="66"/>
    </location>
</feature>
<feature type="transmembrane region" description="Helical" evidence="1">
    <location>
        <begin position="29"/>
        <end position="49"/>
    </location>
</feature>
<reference key="1">
    <citation type="journal article" date="2005" name="PLoS Biol.">
        <title>The genome sequence of Rickettsia felis identifies the first putative conjugative plasmid in an obligate intracellular parasite.</title>
        <authorList>
            <person name="Ogata H."/>
            <person name="Renesto P."/>
            <person name="Audic S."/>
            <person name="Robert C."/>
            <person name="Blanc G."/>
            <person name="Fournier P.-E."/>
            <person name="Parinello H."/>
            <person name="Claverie J.-M."/>
            <person name="Raoult D."/>
        </authorList>
    </citation>
    <scope>NUCLEOTIDE SEQUENCE [LARGE SCALE GENOMIC DNA]</scope>
    <source>
        <strain>ATCC VR-1525 / URRWXCal2</strain>
    </source>
</reference>
<comment type="function">
    <text evidence="1">Essential subunit of the Sec protein translocation channel SecYEG. Clamps together the 2 halves of SecY. May contact the channel plug during translocation.</text>
</comment>
<comment type="subunit">
    <text evidence="1">Component of the Sec protein translocase complex. Heterotrimer consisting of SecY, SecE and SecG subunits. The heterotrimers can form oligomers, although 1 heterotrimer is thought to be able to translocate proteins. Interacts with the ribosome. Interacts with SecDF, and other proteins may be involved. Interacts with SecA.</text>
</comment>
<comment type="subcellular location">
    <subcellularLocation>
        <location evidence="1">Cell inner membrane</location>
        <topology evidence="1">Single-pass membrane protein</topology>
    </subcellularLocation>
</comment>
<comment type="similarity">
    <text evidence="1">Belongs to the SecE/SEC61-gamma family.</text>
</comment>
<comment type="sequence caution" evidence="2">
    <conflict type="erroneous initiation">
        <sequence resource="EMBL-CDS" id="AAY62003"/>
    </conflict>
    <text>Extended N-terminus.</text>
</comment>
<gene>
    <name evidence="1" type="primary">secE</name>
    <name type="ordered locus">RF_1152</name>
</gene>
<accession>Q4UKC8</accession>
<keyword id="KW-0997">Cell inner membrane</keyword>
<keyword id="KW-1003">Cell membrane</keyword>
<keyword id="KW-0472">Membrane</keyword>
<keyword id="KW-0653">Protein transport</keyword>
<keyword id="KW-0811">Translocation</keyword>
<keyword id="KW-0812">Transmembrane</keyword>
<keyword id="KW-1133">Transmembrane helix</keyword>
<keyword id="KW-0813">Transport</keyword>
<protein>
    <recommendedName>
        <fullName evidence="1">Protein translocase subunit SecE</fullName>
    </recommendedName>
</protein>
<name>SECE_RICFE</name>
<proteinExistence type="inferred from homology"/>
<sequence length="66" mass="7829">MFKEYKIYKFFEQVKQETYKVVWPTRKELVASTLVVVVAVFIFSLICLVLDYSIHNIMQLLLNIGK</sequence>
<evidence type="ECO:0000255" key="1">
    <source>
        <dbReference type="HAMAP-Rule" id="MF_00422"/>
    </source>
</evidence>
<evidence type="ECO:0000305" key="2"/>
<dbReference type="EMBL" id="CP000053">
    <property type="protein sequence ID" value="AAY62003.1"/>
    <property type="status" value="ALT_INIT"/>
    <property type="molecule type" value="Genomic_DNA"/>
</dbReference>
<dbReference type="SMR" id="Q4UKC8"/>
<dbReference type="STRING" id="315456.RF_1152"/>
<dbReference type="KEGG" id="rfe:RF_1152"/>
<dbReference type="eggNOG" id="COG0690">
    <property type="taxonomic scope" value="Bacteria"/>
</dbReference>
<dbReference type="HOGENOM" id="CLU_113663_4_2_5"/>
<dbReference type="Proteomes" id="UP000008548">
    <property type="component" value="Chromosome"/>
</dbReference>
<dbReference type="GO" id="GO:0005886">
    <property type="term" value="C:plasma membrane"/>
    <property type="evidence" value="ECO:0007669"/>
    <property type="project" value="UniProtKB-SubCell"/>
</dbReference>
<dbReference type="GO" id="GO:0008320">
    <property type="term" value="F:protein transmembrane transporter activity"/>
    <property type="evidence" value="ECO:0007669"/>
    <property type="project" value="UniProtKB-UniRule"/>
</dbReference>
<dbReference type="GO" id="GO:0065002">
    <property type="term" value="P:intracellular protein transmembrane transport"/>
    <property type="evidence" value="ECO:0007669"/>
    <property type="project" value="UniProtKB-UniRule"/>
</dbReference>
<dbReference type="GO" id="GO:0009306">
    <property type="term" value="P:protein secretion"/>
    <property type="evidence" value="ECO:0007669"/>
    <property type="project" value="UniProtKB-UniRule"/>
</dbReference>
<dbReference type="GO" id="GO:0006605">
    <property type="term" value="P:protein targeting"/>
    <property type="evidence" value="ECO:0007669"/>
    <property type="project" value="UniProtKB-UniRule"/>
</dbReference>
<dbReference type="GO" id="GO:0043952">
    <property type="term" value="P:protein transport by the Sec complex"/>
    <property type="evidence" value="ECO:0007669"/>
    <property type="project" value="UniProtKB-UniRule"/>
</dbReference>
<dbReference type="Gene3D" id="1.20.5.1030">
    <property type="entry name" value="Preprotein translocase secy subunit"/>
    <property type="match status" value="1"/>
</dbReference>
<dbReference type="HAMAP" id="MF_00422">
    <property type="entry name" value="SecE"/>
    <property type="match status" value="1"/>
</dbReference>
<dbReference type="InterPro" id="IPR005807">
    <property type="entry name" value="SecE_bac"/>
</dbReference>
<dbReference type="InterPro" id="IPR038379">
    <property type="entry name" value="SecE_sf"/>
</dbReference>
<dbReference type="InterPro" id="IPR001901">
    <property type="entry name" value="Translocase_SecE/Sec61-g"/>
</dbReference>
<dbReference type="NCBIfam" id="TIGR00964">
    <property type="entry name" value="secE_bact"/>
    <property type="match status" value="1"/>
</dbReference>
<dbReference type="PANTHER" id="PTHR33910">
    <property type="entry name" value="PROTEIN TRANSLOCASE SUBUNIT SECE"/>
    <property type="match status" value="1"/>
</dbReference>
<dbReference type="PANTHER" id="PTHR33910:SF1">
    <property type="entry name" value="PROTEIN TRANSLOCASE SUBUNIT SECE"/>
    <property type="match status" value="1"/>
</dbReference>
<dbReference type="Pfam" id="PF00584">
    <property type="entry name" value="SecE"/>
    <property type="match status" value="1"/>
</dbReference>
<dbReference type="PROSITE" id="PS01067">
    <property type="entry name" value="SECE_SEC61G"/>
    <property type="match status" value="1"/>
</dbReference>
<organism>
    <name type="scientific">Rickettsia felis (strain ATCC VR-1525 / URRWXCal2)</name>
    <name type="common">Rickettsia azadi</name>
    <dbReference type="NCBI Taxonomy" id="315456"/>
    <lineage>
        <taxon>Bacteria</taxon>
        <taxon>Pseudomonadati</taxon>
        <taxon>Pseudomonadota</taxon>
        <taxon>Alphaproteobacteria</taxon>
        <taxon>Rickettsiales</taxon>
        <taxon>Rickettsiaceae</taxon>
        <taxon>Rickettsieae</taxon>
        <taxon>Rickettsia</taxon>
        <taxon>spotted fever group</taxon>
    </lineage>
</organism>